<comment type="function">
    <text evidence="1">May be involved in the metabolism of insect hormones and in the breakdown of synthetic insecticides.</text>
</comment>
<comment type="cofactor">
    <cofactor evidence="1">
        <name>heme</name>
        <dbReference type="ChEBI" id="CHEBI:30413"/>
    </cofactor>
</comment>
<comment type="subcellular location">
    <subcellularLocation>
        <location evidence="2">Endoplasmic reticulum membrane</location>
        <topology evidence="2">Peripheral membrane protein</topology>
    </subcellularLocation>
    <subcellularLocation>
        <location evidence="2">Microsome membrane</location>
        <topology evidence="2">Peripheral membrane protein</topology>
    </subcellularLocation>
</comment>
<comment type="similarity">
    <text evidence="2">Belongs to the cytochrome P450 family.</text>
</comment>
<gene>
    <name type="primary">Cyp312a1</name>
    <name type="ORF">CG5137</name>
</gene>
<accession>Q9VVN6</accession>
<accession>Q1ECB7</accession>
<dbReference type="EC" id="1.14.-.-"/>
<dbReference type="EMBL" id="AE014296">
    <property type="protein sequence ID" value="AAF49275.1"/>
    <property type="molecule type" value="Genomic_DNA"/>
</dbReference>
<dbReference type="EMBL" id="BT025817">
    <property type="protein sequence ID" value="ABF85717.1"/>
    <property type="molecule type" value="mRNA"/>
</dbReference>
<dbReference type="RefSeq" id="NP_001262008.1">
    <property type="nucleotide sequence ID" value="NM_001275079.1"/>
</dbReference>
<dbReference type="RefSeq" id="NP_649030.1">
    <property type="nucleotide sequence ID" value="NM_140773.3"/>
</dbReference>
<dbReference type="SMR" id="Q9VVN6"/>
<dbReference type="BioGRID" id="65290">
    <property type="interactions" value="2"/>
</dbReference>
<dbReference type="DIP" id="DIP-19123N"/>
<dbReference type="FunCoup" id="Q9VVN6">
    <property type="interactions" value="7"/>
</dbReference>
<dbReference type="IntAct" id="Q9VVN6">
    <property type="interactions" value="1"/>
</dbReference>
<dbReference type="STRING" id="7227.FBpp0305085"/>
<dbReference type="PaxDb" id="7227-FBpp0305085"/>
<dbReference type="DNASU" id="40005"/>
<dbReference type="EnsemblMetazoa" id="FBtr0075135">
    <property type="protein sequence ID" value="FBpp0074901"/>
    <property type="gene ID" value="FBgn0036778"/>
</dbReference>
<dbReference type="EnsemblMetazoa" id="FBtr0332863">
    <property type="protein sequence ID" value="FBpp0305085"/>
    <property type="gene ID" value="FBgn0036778"/>
</dbReference>
<dbReference type="GeneID" id="40005"/>
<dbReference type="KEGG" id="dme:Dmel_CG5137"/>
<dbReference type="UCSC" id="CG5137-RA">
    <property type="organism name" value="d. melanogaster"/>
</dbReference>
<dbReference type="AGR" id="FB:FBgn0036778"/>
<dbReference type="CTD" id="40005"/>
<dbReference type="FlyBase" id="FBgn0036778">
    <property type="gene designation" value="Cyp312a1"/>
</dbReference>
<dbReference type="VEuPathDB" id="VectorBase:FBgn0036778"/>
<dbReference type="eggNOG" id="KOG0157">
    <property type="taxonomic scope" value="Eukaryota"/>
</dbReference>
<dbReference type="GeneTree" id="ENSGT00940000165700"/>
<dbReference type="HOGENOM" id="CLU_001570_5_1_1"/>
<dbReference type="InParanoid" id="Q9VVN6"/>
<dbReference type="OMA" id="ISPMYMG"/>
<dbReference type="OrthoDB" id="1055148at2759"/>
<dbReference type="PhylomeDB" id="Q9VVN6"/>
<dbReference type="Reactome" id="R-DME-193144">
    <property type="pathway name" value="Estrogen biosynthesis"/>
</dbReference>
<dbReference type="Reactome" id="R-DME-211976">
    <property type="pathway name" value="Endogenous sterols"/>
</dbReference>
<dbReference type="SignaLink" id="Q9VVN6"/>
<dbReference type="BioGRID-ORCS" id="40005">
    <property type="hits" value="0 hits in 1 CRISPR screen"/>
</dbReference>
<dbReference type="GenomeRNAi" id="40005"/>
<dbReference type="PRO" id="PR:Q9VVN6"/>
<dbReference type="Proteomes" id="UP000000803">
    <property type="component" value="Chromosome 3L"/>
</dbReference>
<dbReference type="Bgee" id="FBgn0036778">
    <property type="expression patterns" value="Expressed in spermatid in male reproductive gland and 45 other cell types or tissues"/>
</dbReference>
<dbReference type="ExpressionAtlas" id="Q9VVN6">
    <property type="expression patterns" value="baseline and differential"/>
</dbReference>
<dbReference type="GO" id="GO:0005789">
    <property type="term" value="C:endoplasmic reticulum membrane"/>
    <property type="evidence" value="ECO:0007669"/>
    <property type="project" value="UniProtKB-SubCell"/>
</dbReference>
<dbReference type="GO" id="GO:0020037">
    <property type="term" value="F:heme binding"/>
    <property type="evidence" value="ECO:0007669"/>
    <property type="project" value="InterPro"/>
</dbReference>
<dbReference type="GO" id="GO:0005506">
    <property type="term" value="F:iron ion binding"/>
    <property type="evidence" value="ECO:0007669"/>
    <property type="project" value="InterPro"/>
</dbReference>
<dbReference type="GO" id="GO:0004497">
    <property type="term" value="F:monooxygenase activity"/>
    <property type="evidence" value="ECO:0007669"/>
    <property type="project" value="UniProtKB-KW"/>
</dbReference>
<dbReference type="GO" id="GO:0016705">
    <property type="term" value="F:oxidoreductase activity, acting on paired donors, with incorporation or reduction of molecular oxygen"/>
    <property type="evidence" value="ECO:0007669"/>
    <property type="project" value="InterPro"/>
</dbReference>
<dbReference type="CDD" id="cd20628">
    <property type="entry name" value="CYP4"/>
    <property type="match status" value="1"/>
</dbReference>
<dbReference type="Gene3D" id="1.10.630.10">
    <property type="entry name" value="Cytochrome P450"/>
    <property type="match status" value="1"/>
</dbReference>
<dbReference type="InterPro" id="IPR001128">
    <property type="entry name" value="Cyt_P450"/>
</dbReference>
<dbReference type="InterPro" id="IPR002403">
    <property type="entry name" value="Cyt_P450_E_grp-IV"/>
</dbReference>
<dbReference type="InterPro" id="IPR036396">
    <property type="entry name" value="Cyt_P450_sf"/>
</dbReference>
<dbReference type="InterPro" id="IPR050196">
    <property type="entry name" value="Cytochrome_P450_Monoox"/>
</dbReference>
<dbReference type="PANTHER" id="PTHR24291:SF203">
    <property type="entry name" value="CYTOCHROME P450 4D1-RELATED"/>
    <property type="match status" value="1"/>
</dbReference>
<dbReference type="PANTHER" id="PTHR24291">
    <property type="entry name" value="CYTOCHROME P450 FAMILY 4"/>
    <property type="match status" value="1"/>
</dbReference>
<dbReference type="Pfam" id="PF00067">
    <property type="entry name" value="p450"/>
    <property type="match status" value="1"/>
</dbReference>
<dbReference type="PRINTS" id="PR00465">
    <property type="entry name" value="EP450IV"/>
</dbReference>
<dbReference type="PRINTS" id="PR00385">
    <property type="entry name" value="P450"/>
</dbReference>
<dbReference type="SUPFAM" id="SSF48264">
    <property type="entry name" value="Cytochrome P450"/>
    <property type="match status" value="1"/>
</dbReference>
<name>CP312_DROME</name>
<organism>
    <name type="scientific">Drosophila melanogaster</name>
    <name type="common">Fruit fly</name>
    <dbReference type="NCBI Taxonomy" id="7227"/>
    <lineage>
        <taxon>Eukaryota</taxon>
        <taxon>Metazoa</taxon>
        <taxon>Ecdysozoa</taxon>
        <taxon>Arthropoda</taxon>
        <taxon>Hexapoda</taxon>
        <taxon>Insecta</taxon>
        <taxon>Pterygota</taxon>
        <taxon>Neoptera</taxon>
        <taxon>Endopterygota</taxon>
        <taxon>Diptera</taxon>
        <taxon>Brachycera</taxon>
        <taxon>Muscomorpha</taxon>
        <taxon>Ephydroidea</taxon>
        <taxon>Drosophilidae</taxon>
        <taxon>Drosophila</taxon>
        <taxon>Sophophora</taxon>
    </lineage>
</organism>
<evidence type="ECO:0000250" key="1"/>
<evidence type="ECO:0000305" key="2"/>
<reference key="1">
    <citation type="journal article" date="2000" name="Science">
        <title>The genome sequence of Drosophila melanogaster.</title>
        <authorList>
            <person name="Adams M.D."/>
            <person name="Celniker S.E."/>
            <person name="Holt R.A."/>
            <person name="Evans C.A."/>
            <person name="Gocayne J.D."/>
            <person name="Amanatides P.G."/>
            <person name="Scherer S.E."/>
            <person name="Li P.W."/>
            <person name="Hoskins R.A."/>
            <person name="Galle R.F."/>
            <person name="George R.A."/>
            <person name="Lewis S.E."/>
            <person name="Richards S."/>
            <person name="Ashburner M."/>
            <person name="Henderson S.N."/>
            <person name="Sutton G.G."/>
            <person name="Wortman J.R."/>
            <person name="Yandell M.D."/>
            <person name="Zhang Q."/>
            <person name="Chen L.X."/>
            <person name="Brandon R.C."/>
            <person name="Rogers Y.-H.C."/>
            <person name="Blazej R.G."/>
            <person name="Champe M."/>
            <person name="Pfeiffer B.D."/>
            <person name="Wan K.H."/>
            <person name="Doyle C."/>
            <person name="Baxter E.G."/>
            <person name="Helt G."/>
            <person name="Nelson C.R."/>
            <person name="Miklos G.L.G."/>
            <person name="Abril J.F."/>
            <person name="Agbayani A."/>
            <person name="An H.-J."/>
            <person name="Andrews-Pfannkoch C."/>
            <person name="Baldwin D."/>
            <person name="Ballew R.M."/>
            <person name="Basu A."/>
            <person name="Baxendale J."/>
            <person name="Bayraktaroglu L."/>
            <person name="Beasley E.M."/>
            <person name="Beeson K.Y."/>
            <person name="Benos P.V."/>
            <person name="Berman B.P."/>
            <person name="Bhandari D."/>
            <person name="Bolshakov S."/>
            <person name="Borkova D."/>
            <person name="Botchan M.R."/>
            <person name="Bouck J."/>
            <person name="Brokstein P."/>
            <person name="Brottier P."/>
            <person name="Burtis K.C."/>
            <person name="Busam D.A."/>
            <person name="Butler H."/>
            <person name="Cadieu E."/>
            <person name="Center A."/>
            <person name="Chandra I."/>
            <person name="Cherry J.M."/>
            <person name="Cawley S."/>
            <person name="Dahlke C."/>
            <person name="Davenport L.B."/>
            <person name="Davies P."/>
            <person name="de Pablos B."/>
            <person name="Delcher A."/>
            <person name="Deng Z."/>
            <person name="Mays A.D."/>
            <person name="Dew I."/>
            <person name="Dietz S.M."/>
            <person name="Dodson K."/>
            <person name="Doup L.E."/>
            <person name="Downes M."/>
            <person name="Dugan-Rocha S."/>
            <person name="Dunkov B.C."/>
            <person name="Dunn P."/>
            <person name="Durbin K.J."/>
            <person name="Evangelista C.C."/>
            <person name="Ferraz C."/>
            <person name="Ferriera S."/>
            <person name="Fleischmann W."/>
            <person name="Fosler C."/>
            <person name="Gabrielian A.E."/>
            <person name="Garg N.S."/>
            <person name="Gelbart W.M."/>
            <person name="Glasser K."/>
            <person name="Glodek A."/>
            <person name="Gong F."/>
            <person name="Gorrell J.H."/>
            <person name="Gu Z."/>
            <person name="Guan P."/>
            <person name="Harris M."/>
            <person name="Harris N.L."/>
            <person name="Harvey D.A."/>
            <person name="Heiman T.J."/>
            <person name="Hernandez J.R."/>
            <person name="Houck J."/>
            <person name="Hostin D."/>
            <person name="Houston K.A."/>
            <person name="Howland T.J."/>
            <person name="Wei M.-H."/>
            <person name="Ibegwam C."/>
            <person name="Jalali M."/>
            <person name="Kalush F."/>
            <person name="Karpen G.H."/>
            <person name="Ke Z."/>
            <person name="Kennison J.A."/>
            <person name="Ketchum K.A."/>
            <person name="Kimmel B.E."/>
            <person name="Kodira C.D."/>
            <person name="Kraft C.L."/>
            <person name="Kravitz S."/>
            <person name="Kulp D."/>
            <person name="Lai Z."/>
            <person name="Lasko P."/>
            <person name="Lei Y."/>
            <person name="Levitsky A.A."/>
            <person name="Li J.H."/>
            <person name="Li Z."/>
            <person name="Liang Y."/>
            <person name="Lin X."/>
            <person name="Liu X."/>
            <person name="Mattei B."/>
            <person name="McIntosh T.C."/>
            <person name="McLeod M.P."/>
            <person name="McPherson D."/>
            <person name="Merkulov G."/>
            <person name="Milshina N.V."/>
            <person name="Mobarry C."/>
            <person name="Morris J."/>
            <person name="Moshrefi A."/>
            <person name="Mount S.M."/>
            <person name="Moy M."/>
            <person name="Murphy B."/>
            <person name="Murphy L."/>
            <person name="Muzny D.M."/>
            <person name="Nelson D.L."/>
            <person name="Nelson D.R."/>
            <person name="Nelson K.A."/>
            <person name="Nixon K."/>
            <person name="Nusskern D.R."/>
            <person name="Pacleb J.M."/>
            <person name="Palazzolo M."/>
            <person name="Pittman G.S."/>
            <person name="Pan S."/>
            <person name="Pollard J."/>
            <person name="Puri V."/>
            <person name="Reese M.G."/>
            <person name="Reinert K."/>
            <person name="Remington K."/>
            <person name="Saunders R.D.C."/>
            <person name="Scheeler F."/>
            <person name="Shen H."/>
            <person name="Shue B.C."/>
            <person name="Siden-Kiamos I."/>
            <person name="Simpson M."/>
            <person name="Skupski M.P."/>
            <person name="Smith T.J."/>
            <person name="Spier E."/>
            <person name="Spradling A.C."/>
            <person name="Stapleton M."/>
            <person name="Strong R."/>
            <person name="Sun E."/>
            <person name="Svirskas R."/>
            <person name="Tector C."/>
            <person name="Turner R."/>
            <person name="Venter E."/>
            <person name="Wang A.H."/>
            <person name="Wang X."/>
            <person name="Wang Z.-Y."/>
            <person name="Wassarman D.A."/>
            <person name="Weinstock G.M."/>
            <person name="Weissenbach J."/>
            <person name="Williams S.M."/>
            <person name="Woodage T."/>
            <person name="Worley K.C."/>
            <person name="Wu D."/>
            <person name="Yang S."/>
            <person name="Yao Q.A."/>
            <person name="Ye J."/>
            <person name="Yeh R.-F."/>
            <person name="Zaveri J.S."/>
            <person name="Zhan M."/>
            <person name="Zhang G."/>
            <person name="Zhao Q."/>
            <person name="Zheng L."/>
            <person name="Zheng X.H."/>
            <person name="Zhong F.N."/>
            <person name="Zhong W."/>
            <person name="Zhou X."/>
            <person name="Zhu S.C."/>
            <person name="Zhu X."/>
            <person name="Smith H.O."/>
            <person name="Gibbs R.A."/>
            <person name="Myers E.W."/>
            <person name="Rubin G.M."/>
            <person name="Venter J.C."/>
        </authorList>
    </citation>
    <scope>NUCLEOTIDE SEQUENCE [LARGE SCALE GENOMIC DNA]</scope>
    <source>
        <strain>Berkeley</strain>
    </source>
</reference>
<reference key="2">
    <citation type="journal article" date="2002" name="Genome Biol.">
        <title>Annotation of the Drosophila melanogaster euchromatic genome: a systematic review.</title>
        <authorList>
            <person name="Misra S."/>
            <person name="Crosby M.A."/>
            <person name="Mungall C.J."/>
            <person name="Matthews B.B."/>
            <person name="Campbell K.S."/>
            <person name="Hradecky P."/>
            <person name="Huang Y."/>
            <person name="Kaminker J.S."/>
            <person name="Millburn G.H."/>
            <person name="Prochnik S.E."/>
            <person name="Smith C.D."/>
            <person name="Tupy J.L."/>
            <person name="Whitfield E.J."/>
            <person name="Bayraktaroglu L."/>
            <person name="Berman B.P."/>
            <person name="Bettencourt B.R."/>
            <person name="Celniker S.E."/>
            <person name="de Grey A.D.N.J."/>
            <person name="Drysdale R.A."/>
            <person name="Harris N.L."/>
            <person name="Richter J."/>
            <person name="Russo S."/>
            <person name="Schroeder A.J."/>
            <person name="Shu S.Q."/>
            <person name="Stapleton M."/>
            <person name="Yamada C."/>
            <person name="Ashburner M."/>
            <person name="Gelbart W.M."/>
            <person name="Rubin G.M."/>
            <person name="Lewis S.E."/>
        </authorList>
    </citation>
    <scope>GENOME REANNOTATION</scope>
    <source>
        <strain>Berkeley</strain>
    </source>
</reference>
<reference key="3">
    <citation type="submission" date="2006-06" db="EMBL/GenBank/DDBJ databases">
        <authorList>
            <person name="Stapleton M."/>
            <person name="Carlson J.W."/>
            <person name="Chavez C."/>
            <person name="Frise E."/>
            <person name="George R.A."/>
            <person name="Pacleb J.M."/>
            <person name="Park S."/>
            <person name="Wan K.H."/>
            <person name="Yu C."/>
            <person name="Celniker S.E."/>
        </authorList>
    </citation>
    <scope>NUCLEOTIDE SEQUENCE [LARGE SCALE MRNA]</scope>
    <source>
        <strain>Berkeley</strain>
    </source>
</reference>
<proteinExistence type="evidence at transcript level"/>
<feature type="chain" id="PRO_0000052322" description="Probable cytochrome P450 312a1">
    <location>
        <begin position="1"/>
        <end position="510"/>
    </location>
</feature>
<feature type="binding site" description="axial binding residue" evidence="1">
    <location>
        <position position="455"/>
    </location>
    <ligand>
        <name>heme</name>
        <dbReference type="ChEBI" id="CHEBI:30413"/>
    </ligand>
    <ligandPart>
        <name>Fe</name>
        <dbReference type="ChEBI" id="CHEBI:18248"/>
    </ligandPart>
</feature>
<protein>
    <recommendedName>
        <fullName>Probable cytochrome P450 312a1</fullName>
        <ecNumber>1.14.-.-</ecNumber>
    </recommendedName>
    <alternativeName>
        <fullName>CYPCCCXIIA1</fullName>
    </alternativeName>
</protein>
<keyword id="KW-0256">Endoplasmic reticulum</keyword>
<keyword id="KW-0349">Heme</keyword>
<keyword id="KW-0408">Iron</keyword>
<keyword id="KW-0472">Membrane</keyword>
<keyword id="KW-0479">Metal-binding</keyword>
<keyword id="KW-0492">Microsome</keyword>
<keyword id="KW-0503">Monooxygenase</keyword>
<keyword id="KW-0560">Oxidoreductase</keyword>
<keyword id="KW-1185">Reference proteome</keyword>
<sequence>MFWLGFGLLLLALSLYLLYVFERQSRIDRLTHKWPAPPALPFIGHLHILAKLVGPHPLRRATEMINEHLHDHRAKLWMGTKLYLVDCNPKDIQALCSAQQLLQKTNDYRVFENWLCEGLFTSGFEKWSHRRKIVMPAFNYTMIKQFVAVFEKQSRILLTNVAKFAESGDQIDFLQLISCFTLDTICETALGVSVGSQSSAKSEYLDAVKSILVIIDKRLKNIFYRNSFIFKRTSHYKREQELIKTLHGFTEGIIQKRIDEINQDAENRNYQSSDAELDGVKRTLCFLDTLLLSKGPDGKPLTVKDIREEVDTIIFGGFDLTATTLNFFMYNMTLHPEHQQRCREEVWSVCGKDKSEPISIEQVRQLEFLEACIKETLRMYPSGPLTARKATANCTINDFFIPKGSDVIISPIYMGRCKDFFPDPMVFKPDRWAIGAEPKIEATTFIPFMAGARSCMGQRYAMVMLKMVLAHLLRNFLFEPLGERQVKLKLNFVITLHTVEPYLCRAKNLD</sequence>